<organism>
    <name type="scientific">Enterobacter sp. (strain 638)</name>
    <dbReference type="NCBI Taxonomy" id="399742"/>
    <lineage>
        <taxon>Bacteria</taxon>
        <taxon>Pseudomonadati</taxon>
        <taxon>Pseudomonadota</taxon>
        <taxon>Gammaproteobacteria</taxon>
        <taxon>Enterobacterales</taxon>
        <taxon>Enterobacteriaceae</taxon>
        <taxon>Enterobacter</taxon>
    </lineage>
</organism>
<keyword id="KW-0227">DNA damage</keyword>
<keyword id="KW-0234">DNA repair</keyword>
<keyword id="KW-0235">DNA replication</keyword>
<keyword id="KW-0436">Ligase</keyword>
<keyword id="KW-0460">Magnesium</keyword>
<keyword id="KW-0464">Manganese</keyword>
<keyword id="KW-0479">Metal-binding</keyword>
<keyword id="KW-0520">NAD</keyword>
<keyword id="KW-0862">Zinc</keyword>
<accession>A4WD23</accession>
<feature type="chain" id="PRO_0000340347" description="DNA ligase">
    <location>
        <begin position="1"/>
        <end position="671"/>
    </location>
</feature>
<feature type="domain" description="BRCT" evidence="1">
    <location>
        <begin position="593"/>
        <end position="671"/>
    </location>
</feature>
<feature type="active site" description="N6-AMP-lysine intermediate" evidence="1">
    <location>
        <position position="115"/>
    </location>
</feature>
<feature type="binding site" evidence="1">
    <location>
        <begin position="32"/>
        <end position="36"/>
    </location>
    <ligand>
        <name>NAD(+)</name>
        <dbReference type="ChEBI" id="CHEBI:57540"/>
    </ligand>
</feature>
<feature type="binding site" evidence="1">
    <location>
        <begin position="81"/>
        <end position="82"/>
    </location>
    <ligand>
        <name>NAD(+)</name>
        <dbReference type="ChEBI" id="CHEBI:57540"/>
    </ligand>
</feature>
<feature type="binding site" evidence="1">
    <location>
        <position position="113"/>
    </location>
    <ligand>
        <name>NAD(+)</name>
        <dbReference type="ChEBI" id="CHEBI:57540"/>
    </ligand>
</feature>
<feature type="binding site" evidence="1">
    <location>
        <position position="136"/>
    </location>
    <ligand>
        <name>NAD(+)</name>
        <dbReference type="ChEBI" id="CHEBI:57540"/>
    </ligand>
</feature>
<feature type="binding site" evidence="1">
    <location>
        <position position="173"/>
    </location>
    <ligand>
        <name>NAD(+)</name>
        <dbReference type="ChEBI" id="CHEBI:57540"/>
    </ligand>
</feature>
<feature type="binding site" evidence="1">
    <location>
        <position position="290"/>
    </location>
    <ligand>
        <name>NAD(+)</name>
        <dbReference type="ChEBI" id="CHEBI:57540"/>
    </ligand>
</feature>
<feature type="binding site" evidence="1">
    <location>
        <position position="314"/>
    </location>
    <ligand>
        <name>NAD(+)</name>
        <dbReference type="ChEBI" id="CHEBI:57540"/>
    </ligand>
</feature>
<feature type="binding site" evidence="1">
    <location>
        <position position="408"/>
    </location>
    <ligand>
        <name>Zn(2+)</name>
        <dbReference type="ChEBI" id="CHEBI:29105"/>
    </ligand>
</feature>
<feature type="binding site" evidence="1">
    <location>
        <position position="411"/>
    </location>
    <ligand>
        <name>Zn(2+)</name>
        <dbReference type="ChEBI" id="CHEBI:29105"/>
    </ligand>
</feature>
<feature type="binding site" evidence="1">
    <location>
        <position position="426"/>
    </location>
    <ligand>
        <name>Zn(2+)</name>
        <dbReference type="ChEBI" id="CHEBI:29105"/>
    </ligand>
</feature>
<feature type="binding site" evidence="1">
    <location>
        <position position="432"/>
    </location>
    <ligand>
        <name>Zn(2+)</name>
        <dbReference type="ChEBI" id="CHEBI:29105"/>
    </ligand>
</feature>
<name>DNLJ_ENT38</name>
<evidence type="ECO:0000255" key="1">
    <source>
        <dbReference type="HAMAP-Rule" id="MF_01588"/>
    </source>
</evidence>
<proteinExistence type="inferred from homology"/>
<reference key="1">
    <citation type="journal article" date="2010" name="PLoS Genet.">
        <title>Genome sequence of the plant growth promoting endophytic bacterium Enterobacter sp. 638.</title>
        <authorList>
            <person name="Taghavi S."/>
            <person name="van der Lelie D."/>
            <person name="Hoffman A."/>
            <person name="Zhang Y.B."/>
            <person name="Walla M.D."/>
            <person name="Vangronsveld J."/>
            <person name="Newman L."/>
            <person name="Monchy S."/>
        </authorList>
    </citation>
    <scope>NUCLEOTIDE SEQUENCE [LARGE SCALE GENOMIC DNA]</scope>
    <source>
        <strain>638</strain>
    </source>
</reference>
<gene>
    <name evidence="1" type="primary">ligA</name>
    <name type="ordered locus">Ent638_2939</name>
</gene>
<dbReference type="EC" id="6.5.1.2" evidence="1"/>
<dbReference type="EMBL" id="CP000653">
    <property type="protein sequence ID" value="ABP61603.1"/>
    <property type="molecule type" value="Genomic_DNA"/>
</dbReference>
<dbReference type="RefSeq" id="WP_015959936.1">
    <property type="nucleotide sequence ID" value="NC_009436.1"/>
</dbReference>
<dbReference type="SMR" id="A4WD23"/>
<dbReference type="STRING" id="399742.Ent638_2939"/>
<dbReference type="KEGG" id="ent:Ent638_2939"/>
<dbReference type="eggNOG" id="COG0272">
    <property type="taxonomic scope" value="Bacteria"/>
</dbReference>
<dbReference type="HOGENOM" id="CLU_007764_2_1_6"/>
<dbReference type="OrthoDB" id="9759736at2"/>
<dbReference type="Proteomes" id="UP000000230">
    <property type="component" value="Chromosome"/>
</dbReference>
<dbReference type="GO" id="GO:0005829">
    <property type="term" value="C:cytosol"/>
    <property type="evidence" value="ECO:0007669"/>
    <property type="project" value="TreeGrafter"/>
</dbReference>
<dbReference type="GO" id="GO:0003677">
    <property type="term" value="F:DNA binding"/>
    <property type="evidence" value="ECO:0007669"/>
    <property type="project" value="InterPro"/>
</dbReference>
<dbReference type="GO" id="GO:0003911">
    <property type="term" value="F:DNA ligase (NAD+) activity"/>
    <property type="evidence" value="ECO:0007669"/>
    <property type="project" value="UniProtKB-UniRule"/>
</dbReference>
<dbReference type="GO" id="GO:0046872">
    <property type="term" value="F:metal ion binding"/>
    <property type="evidence" value="ECO:0007669"/>
    <property type="project" value="UniProtKB-KW"/>
</dbReference>
<dbReference type="GO" id="GO:0006281">
    <property type="term" value="P:DNA repair"/>
    <property type="evidence" value="ECO:0007669"/>
    <property type="project" value="UniProtKB-KW"/>
</dbReference>
<dbReference type="GO" id="GO:0006260">
    <property type="term" value="P:DNA replication"/>
    <property type="evidence" value="ECO:0007669"/>
    <property type="project" value="UniProtKB-KW"/>
</dbReference>
<dbReference type="CDD" id="cd17748">
    <property type="entry name" value="BRCT_DNA_ligase_like"/>
    <property type="match status" value="1"/>
</dbReference>
<dbReference type="CDD" id="cd00114">
    <property type="entry name" value="LIGANc"/>
    <property type="match status" value="1"/>
</dbReference>
<dbReference type="FunFam" id="1.10.150.20:FF:000006">
    <property type="entry name" value="DNA ligase"/>
    <property type="match status" value="1"/>
</dbReference>
<dbReference type="FunFam" id="1.10.150.20:FF:000007">
    <property type="entry name" value="DNA ligase"/>
    <property type="match status" value="1"/>
</dbReference>
<dbReference type="FunFam" id="1.10.287.610:FF:000002">
    <property type="entry name" value="DNA ligase"/>
    <property type="match status" value="1"/>
</dbReference>
<dbReference type="FunFam" id="2.40.50.140:FF:000012">
    <property type="entry name" value="DNA ligase"/>
    <property type="match status" value="1"/>
</dbReference>
<dbReference type="FunFam" id="3.30.470.30:FF:000001">
    <property type="entry name" value="DNA ligase"/>
    <property type="match status" value="1"/>
</dbReference>
<dbReference type="FunFam" id="3.40.50.10190:FF:000004">
    <property type="entry name" value="DNA ligase"/>
    <property type="match status" value="1"/>
</dbReference>
<dbReference type="FunFam" id="6.20.10.30:FF:000001">
    <property type="entry name" value="DNA ligase"/>
    <property type="match status" value="1"/>
</dbReference>
<dbReference type="Gene3D" id="6.20.10.30">
    <property type="match status" value="1"/>
</dbReference>
<dbReference type="Gene3D" id="1.10.150.20">
    <property type="entry name" value="5' to 3' exonuclease, C-terminal subdomain"/>
    <property type="match status" value="2"/>
</dbReference>
<dbReference type="Gene3D" id="3.40.50.10190">
    <property type="entry name" value="BRCT domain"/>
    <property type="match status" value="1"/>
</dbReference>
<dbReference type="Gene3D" id="3.30.470.30">
    <property type="entry name" value="DNA ligase/mRNA capping enzyme"/>
    <property type="match status" value="1"/>
</dbReference>
<dbReference type="Gene3D" id="1.10.287.610">
    <property type="entry name" value="Helix hairpin bin"/>
    <property type="match status" value="1"/>
</dbReference>
<dbReference type="Gene3D" id="2.40.50.140">
    <property type="entry name" value="Nucleic acid-binding proteins"/>
    <property type="match status" value="1"/>
</dbReference>
<dbReference type="HAMAP" id="MF_01588">
    <property type="entry name" value="DNA_ligase_A"/>
    <property type="match status" value="1"/>
</dbReference>
<dbReference type="InterPro" id="IPR001357">
    <property type="entry name" value="BRCT_dom"/>
</dbReference>
<dbReference type="InterPro" id="IPR036420">
    <property type="entry name" value="BRCT_dom_sf"/>
</dbReference>
<dbReference type="InterPro" id="IPR041663">
    <property type="entry name" value="DisA/LigA_HHH"/>
</dbReference>
<dbReference type="InterPro" id="IPR001679">
    <property type="entry name" value="DNA_ligase"/>
</dbReference>
<dbReference type="InterPro" id="IPR018239">
    <property type="entry name" value="DNA_ligase_AS"/>
</dbReference>
<dbReference type="InterPro" id="IPR033136">
    <property type="entry name" value="DNA_ligase_CS"/>
</dbReference>
<dbReference type="InterPro" id="IPR013839">
    <property type="entry name" value="DNAligase_adenylation"/>
</dbReference>
<dbReference type="InterPro" id="IPR013840">
    <property type="entry name" value="DNAligase_N"/>
</dbReference>
<dbReference type="InterPro" id="IPR003583">
    <property type="entry name" value="Hlx-hairpin-Hlx_DNA-bd_motif"/>
</dbReference>
<dbReference type="InterPro" id="IPR012340">
    <property type="entry name" value="NA-bd_OB-fold"/>
</dbReference>
<dbReference type="InterPro" id="IPR004150">
    <property type="entry name" value="NAD_DNA_ligase_OB"/>
</dbReference>
<dbReference type="InterPro" id="IPR010994">
    <property type="entry name" value="RuvA_2-like"/>
</dbReference>
<dbReference type="InterPro" id="IPR004149">
    <property type="entry name" value="Znf_DNAligase_C4"/>
</dbReference>
<dbReference type="NCBIfam" id="TIGR00575">
    <property type="entry name" value="dnlj"/>
    <property type="match status" value="1"/>
</dbReference>
<dbReference type="NCBIfam" id="NF005932">
    <property type="entry name" value="PRK07956.1"/>
    <property type="match status" value="1"/>
</dbReference>
<dbReference type="PANTHER" id="PTHR23389">
    <property type="entry name" value="CHROMOSOME TRANSMISSION FIDELITY FACTOR 18"/>
    <property type="match status" value="1"/>
</dbReference>
<dbReference type="PANTHER" id="PTHR23389:SF9">
    <property type="entry name" value="DNA LIGASE"/>
    <property type="match status" value="1"/>
</dbReference>
<dbReference type="Pfam" id="PF00533">
    <property type="entry name" value="BRCT"/>
    <property type="match status" value="1"/>
</dbReference>
<dbReference type="Pfam" id="PF01653">
    <property type="entry name" value="DNA_ligase_aden"/>
    <property type="match status" value="1"/>
</dbReference>
<dbReference type="Pfam" id="PF03120">
    <property type="entry name" value="DNA_ligase_OB"/>
    <property type="match status" value="1"/>
</dbReference>
<dbReference type="Pfam" id="PF03119">
    <property type="entry name" value="DNA_ligase_ZBD"/>
    <property type="match status" value="1"/>
</dbReference>
<dbReference type="Pfam" id="PF12826">
    <property type="entry name" value="HHH_2"/>
    <property type="match status" value="1"/>
</dbReference>
<dbReference type="Pfam" id="PF14520">
    <property type="entry name" value="HHH_5"/>
    <property type="match status" value="1"/>
</dbReference>
<dbReference type="Pfam" id="PF22745">
    <property type="entry name" value="Nlig-Ia"/>
    <property type="match status" value="1"/>
</dbReference>
<dbReference type="PIRSF" id="PIRSF001604">
    <property type="entry name" value="LigA"/>
    <property type="match status" value="1"/>
</dbReference>
<dbReference type="SMART" id="SM00292">
    <property type="entry name" value="BRCT"/>
    <property type="match status" value="1"/>
</dbReference>
<dbReference type="SMART" id="SM00278">
    <property type="entry name" value="HhH1"/>
    <property type="match status" value="4"/>
</dbReference>
<dbReference type="SMART" id="SM00532">
    <property type="entry name" value="LIGANc"/>
    <property type="match status" value="1"/>
</dbReference>
<dbReference type="SUPFAM" id="SSF52113">
    <property type="entry name" value="BRCT domain"/>
    <property type="match status" value="1"/>
</dbReference>
<dbReference type="SUPFAM" id="SSF56091">
    <property type="entry name" value="DNA ligase/mRNA capping enzyme, catalytic domain"/>
    <property type="match status" value="1"/>
</dbReference>
<dbReference type="SUPFAM" id="SSF50249">
    <property type="entry name" value="Nucleic acid-binding proteins"/>
    <property type="match status" value="1"/>
</dbReference>
<dbReference type="SUPFAM" id="SSF47781">
    <property type="entry name" value="RuvA domain 2-like"/>
    <property type="match status" value="1"/>
</dbReference>
<dbReference type="PROSITE" id="PS50172">
    <property type="entry name" value="BRCT"/>
    <property type="match status" value="1"/>
</dbReference>
<dbReference type="PROSITE" id="PS01055">
    <property type="entry name" value="DNA_LIGASE_N1"/>
    <property type="match status" value="1"/>
</dbReference>
<dbReference type="PROSITE" id="PS01056">
    <property type="entry name" value="DNA_LIGASE_N2"/>
    <property type="match status" value="1"/>
</dbReference>
<comment type="function">
    <text evidence="1">DNA ligase that catalyzes the formation of phosphodiester linkages between 5'-phosphoryl and 3'-hydroxyl groups in double-stranded DNA using NAD as a coenzyme and as the energy source for the reaction. It is essential for DNA replication and repair of damaged DNA.</text>
</comment>
<comment type="catalytic activity">
    <reaction evidence="1">
        <text>NAD(+) + (deoxyribonucleotide)n-3'-hydroxyl + 5'-phospho-(deoxyribonucleotide)m = (deoxyribonucleotide)n+m + AMP + beta-nicotinamide D-nucleotide.</text>
        <dbReference type="EC" id="6.5.1.2"/>
    </reaction>
</comment>
<comment type="cofactor">
    <cofactor evidence="1">
        <name>Mg(2+)</name>
        <dbReference type="ChEBI" id="CHEBI:18420"/>
    </cofactor>
    <cofactor evidence="1">
        <name>Mn(2+)</name>
        <dbReference type="ChEBI" id="CHEBI:29035"/>
    </cofactor>
</comment>
<comment type="similarity">
    <text evidence="1">Belongs to the NAD-dependent DNA ligase family. LigA subfamily.</text>
</comment>
<sequence length="671" mass="73591">MDSIEQQLTQLRTTLRHHEYLYHVMDAPEVPDAEYDRLMRELRELEAQHPELVTPDSPTQRVGAAPLASFSQVRHEVPMLSLDNVFDEESFLAFNKRVQDRLKSADTLTWCCELKLDGLAVSILYENGLLVRAATRGDGTTGEDITANVRTIRAIPLTLRGDNIPARLEVRGEVFLPQKGFEKINDEARRTGGKIFANPRNAAAGSLRQLDPRITAKRPLTFFCYGVGILEGGVLPDTHLGRLLQFKEWGLPVSNRVQLCDSPEAVLAFYHKVEEDRPSLGFDIDGVVIKVNSLALQEQLGFVARAPRWAVAFKFPAQEQMTFVRDVEFQVGRTGAITPVARLEPVQVAGVLVSNATLHNADEIARLGLRIGDKVVIRRAGDVIPQVVNVVESERPDDTREIVFPAHCPVCGSDVERVEGEVVTRCTGGLICGAQRKEALKHFVSRRALDVDGMGDKIIDQLVEKEYVHTPADLFRLSAGKLTGLDRMGPKSAQNVVNALEKAKETTFARFLYALGIREVGEATAAGLAAHFGTLEQLEKATIDDLQKVPDVGIVVATHVFNFFAEESNRDVIGKLLEEGIHWPAPVVINVEEIDSPFAGKTVVLTGSLSQMSRDDAKARLVAIGAKVAGSVSKKTDLVIAGEAAGSKLAKAQELGIDVIDEAEMLRLFGE</sequence>
<protein>
    <recommendedName>
        <fullName evidence="1">DNA ligase</fullName>
        <ecNumber evidence="1">6.5.1.2</ecNumber>
    </recommendedName>
    <alternativeName>
        <fullName evidence="1">Polydeoxyribonucleotide synthase [NAD(+)]</fullName>
    </alternativeName>
</protein>